<reference key="1">
    <citation type="journal article" date="2007" name="J. Bacteriol.">
        <title>Complete genome of acute rheumatic fever-associated serotype M5 Streptococcus pyogenes strain Manfredo.</title>
        <authorList>
            <person name="Holden M.T.G."/>
            <person name="Scott A."/>
            <person name="Cherevach I."/>
            <person name="Chillingworth T."/>
            <person name="Churcher C."/>
            <person name="Cronin A."/>
            <person name="Dowd L."/>
            <person name="Feltwell T."/>
            <person name="Hamlin N."/>
            <person name="Holroyd S."/>
            <person name="Jagels K."/>
            <person name="Moule S."/>
            <person name="Mungall K."/>
            <person name="Quail M.A."/>
            <person name="Price C."/>
            <person name="Rabbinowitsch E."/>
            <person name="Sharp S."/>
            <person name="Skelton J."/>
            <person name="Whitehead S."/>
            <person name="Barrell B.G."/>
            <person name="Kehoe M."/>
            <person name="Parkhill J."/>
        </authorList>
    </citation>
    <scope>NUCLEOTIDE SEQUENCE [LARGE SCALE GENOMIC DNA]</scope>
    <source>
        <strain>Manfredo</strain>
    </source>
</reference>
<evidence type="ECO:0000255" key="1">
    <source>
        <dbReference type="HAMAP-Rule" id="MF_00565"/>
    </source>
</evidence>
<sequence>MSIEETVIELFDRLFMEDVSEMMDEDLFDAGVLDSLGTVELIVELESTFNIKVPISEFGRDDWNTVTKIVQGVEELQHA</sequence>
<protein>
    <recommendedName>
        <fullName evidence="1">D-alanyl carrier protein</fullName>
        <shortName evidence="1">DCP</shortName>
    </recommendedName>
    <alternativeName>
        <fullName evidence="1">D-alanine--poly(phosphoribitol) ligase subunit 2</fullName>
    </alternativeName>
</protein>
<gene>
    <name evidence="1" type="primary">dltC</name>
    <name type="ordered locus">SpyM50794</name>
</gene>
<keyword id="KW-0961">Cell wall biogenesis/degradation</keyword>
<keyword id="KW-0963">Cytoplasm</keyword>
<keyword id="KW-0596">Phosphopantetheine</keyword>
<keyword id="KW-0597">Phosphoprotein</keyword>
<dbReference type="EMBL" id="AM295007">
    <property type="protein sequence ID" value="CAM30122.1"/>
    <property type="molecule type" value="Genomic_DNA"/>
</dbReference>
<dbReference type="RefSeq" id="WP_002984216.1">
    <property type="nucleotide sequence ID" value="NC_009332.1"/>
</dbReference>
<dbReference type="SMR" id="A2RE47"/>
<dbReference type="GeneID" id="83690920"/>
<dbReference type="KEGG" id="spf:SpyM50794"/>
<dbReference type="HOGENOM" id="CLU_108696_19_0_9"/>
<dbReference type="UniPathway" id="UPA00556"/>
<dbReference type="GO" id="GO:0005737">
    <property type="term" value="C:cytoplasm"/>
    <property type="evidence" value="ECO:0007669"/>
    <property type="project" value="UniProtKB-SubCell"/>
</dbReference>
<dbReference type="GO" id="GO:0036370">
    <property type="term" value="F:D-alanyl carrier activity"/>
    <property type="evidence" value="ECO:0007669"/>
    <property type="project" value="UniProtKB-UniRule"/>
</dbReference>
<dbReference type="GO" id="GO:0071555">
    <property type="term" value="P:cell wall organization"/>
    <property type="evidence" value="ECO:0007669"/>
    <property type="project" value="UniProtKB-KW"/>
</dbReference>
<dbReference type="GO" id="GO:0070395">
    <property type="term" value="P:lipoteichoic acid biosynthetic process"/>
    <property type="evidence" value="ECO:0007669"/>
    <property type="project" value="UniProtKB-UniRule"/>
</dbReference>
<dbReference type="Gene3D" id="1.10.1200.10">
    <property type="entry name" value="ACP-like"/>
    <property type="match status" value="1"/>
</dbReference>
<dbReference type="HAMAP" id="MF_00565">
    <property type="entry name" value="DltC"/>
    <property type="match status" value="1"/>
</dbReference>
<dbReference type="InterPro" id="IPR036736">
    <property type="entry name" value="ACP-like_sf"/>
</dbReference>
<dbReference type="InterPro" id="IPR003230">
    <property type="entry name" value="DltC"/>
</dbReference>
<dbReference type="InterPro" id="IPR009081">
    <property type="entry name" value="PP-bd_ACP"/>
</dbReference>
<dbReference type="NCBIfam" id="TIGR01688">
    <property type="entry name" value="dltC"/>
    <property type="match status" value="1"/>
</dbReference>
<dbReference type="NCBIfam" id="NF003464">
    <property type="entry name" value="PRK05087.1"/>
    <property type="match status" value="1"/>
</dbReference>
<dbReference type="Pfam" id="PF00550">
    <property type="entry name" value="PP-binding"/>
    <property type="match status" value="1"/>
</dbReference>
<dbReference type="SUPFAM" id="SSF47336">
    <property type="entry name" value="ACP-like"/>
    <property type="match status" value="1"/>
</dbReference>
<dbReference type="PROSITE" id="PS50075">
    <property type="entry name" value="CARRIER"/>
    <property type="match status" value="1"/>
</dbReference>
<comment type="function">
    <text evidence="1">Carrier protein involved in the D-alanylation of lipoteichoic acid (LTA). The loading of thioester-linked D-alanine onto DltC is catalyzed by D-alanine--D-alanyl carrier protein ligase DltA. The DltC-carried D-alanyl group is further transferred to cell membrane phosphatidylglycerol (PG) by forming an ester bond, probably catalyzed by DltD. D-alanylation of LTA plays an important role in modulating the properties of the cell wall in Gram-positive bacteria, influencing the net charge of the cell wall.</text>
</comment>
<comment type="pathway">
    <text evidence="1">Cell wall biogenesis; lipoteichoic acid biosynthesis.</text>
</comment>
<comment type="subcellular location">
    <subcellularLocation>
        <location evidence="1">Cytoplasm</location>
    </subcellularLocation>
</comment>
<comment type="PTM">
    <text evidence="1">4'-phosphopantetheine is transferred from CoA to a specific serine of apo-DCP.</text>
</comment>
<comment type="similarity">
    <text evidence="1">Belongs to the DltC family.</text>
</comment>
<proteinExistence type="inferred from homology"/>
<organism>
    <name type="scientific">Streptococcus pyogenes serotype M5 (strain Manfredo)</name>
    <dbReference type="NCBI Taxonomy" id="160491"/>
    <lineage>
        <taxon>Bacteria</taxon>
        <taxon>Bacillati</taxon>
        <taxon>Bacillota</taxon>
        <taxon>Bacilli</taxon>
        <taxon>Lactobacillales</taxon>
        <taxon>Streptococcaceae</taxon>
        <taxon>Streptococcus</taxon>
    </lineage>
</organism>
<feature type="chain" id="PRO_1000024932" description="D-alanyl carrier protein">
    <location>
        <begin position="1"/>
        <end position="79"/>
    </location>
</feature>
<feature type="domain" description="Carrier" evidence="1">
    <location>
        <begin position="1"/>
        <end position="77"/>
    </location>
</feature>
<feature type="modified residue" description="O-(pantetheine 4'-phosphoryl)serine" evidence="1">
    <location>
        <position position="35"/>
    </location>
</feature>
<accession>A2RE47</accession>
<name>DLTC_STRPG</name>